<name>ERD2_PLAFA</name>
<feature type="chain" id="PRO_0000194166" description="ER lumen protein-retaining receptor">
    <location>
        <begin position="1"/>
        <end position="221"/>
    </location>
</feature>
<feature type="topological domain" description="Lumenal" evidence="2">
    <location>
        <begin position="1"/>
        <end position="2"/>
    </location>
</feature>
<feature type="transmembrane region" description="Helical" evidence="2">
    <location>
        <begin position="3"/>
        <end position="21"/>
    </location>
</feature>
<feature type="topological domain" description="Cytoplasmic" evidence="2">
    <location>
        <begin position="22"/>
        <end position="35"/>
    </location>
</feature>
<feature type="transmembrane region" description="Helical" evidence="2">
    <location>
        <begin position="36"/>
        <end position="52"/>
    </location>
</feature>
<feature type="topological domain" description="Lumenal" evidence="2">
    <location>
        <begin position="53"/>
        <end position="61"/>
    </location>
</feature>
<feature type="transmembrane region" description="Helical" evidence="2">
    <location>
        <begin position="62"/>
        <end position="80"/>
    </location>
</feature>
<feature type="topological domain" description="Cytoplasmic" evidence="2">
    <location>
        <begin position="81"/>
        <end position="99"/>
    </location>
</feature>
<feature type="transmembrane region" description="Helical" evidence="2">
    <location>
        <begin position="100"/>
        <end position="113"/>
    </location>
</feature>
<feature type="topological domain" description="Lumenal" evidence="2">
    <location>
        <begin position="114"/>
        <end position="120"/>
    </location>
</feature>
<feature type="transmembrane region" description="Helical" evidence="2">
    <location>
        <begin position="121"/>
        <end position="140"/>
    </location>
</feature>
<feature type="topological domain" description="Cytoplasmic" evidence="2">
    <location>
        <begin position="141"/>
        <end position="152"/>
    </location>
</feature>
<feature type="transmembrane region" description="Helical" evidence="2">
    <location>
        <begin position="153"/>
        <end position="171"/>
    </location>
</feature>
<feature type="topological domain" description="Lumenal" evidence="2">
    <location>
        <begin position="172"/>
        <end position="183"/>
    </location>
</feature>
<feature type="transmembrane region" description="Helical" evidence="2">
    <location>
        <begin position="184"/>
        <end position="203"/>
    </location>
</feature>
<feature type="topological domain" description="Cytoplasmic" evidence="2">
    <location>
        <begin position="204"/>
        <end position="221"/>
    </location>
</feature>
<dbReference type="EMBL" id="X74869">
    <property type="protein sequence ID" value="CAA52861.1"/>
    <property type="molecule type" value="mRNA"/>
</dbReference>
<dbReference type="EMBL" id="Z26043">
    <property type="protein sequence ID" value="CAA81128.1"/>
    <property type="molecule type" value="mRNA"/>
</dbReference>
<dbReference type="PIR" id="S39609">
    <property type="entry name" value="S39609"/>
</dbReference>
<dbReference type="SMR" id="P33948"/>
<dbReference type="EnsemblProtists" id="CAD52657">
    <property type="protein sequence ID" value="CAD52657"/>
    <property type="gene ID" value="PF3D7_1353600"/>
</dbReference>
<dbReference type="VEuPathDB" id="PlasmoDB:PF3D7_1353600"/>
<dbReference type="VEuPathDB" id="PlasmoDB:Pf7G8-2_000456100"/>
<dbReference type="VEuPathDB" id="PlasmoDB:Pf7G8_130058200"/>
<dbReference type="VEuPathDB" id="PlasmoDB:PfCD01_130059300"/>
<dbReference type="VEuPathDB" id="PlasmoDB:PfDd2_130059500"/>
<dbReference type="VEuPathDB" id="PlasmoDB:PfGA01_130059800"/>
<dbReference type="VEuPathDB" id="PlasmoDB:PfGB4_130059600"/>
<dbReference type="VEuPathDB" id="PlasmoDB:PfGN01_130060400"/>
<dbReference type="VEuPathDB" id="PlasmoDB:PfHB3_130060100"/>
<dbReference type="VEuPathDB" id="PlasmoDB:PfIT_130059000"/>
<dbReference type="VEuPathDB" id="PlasmoDB:PfKE01_130059300"/>
<dbReference type="VEuPathDB" id="PlasmoDB:PfKH01_130057700"/>
<dbReference type="VEuPathDB" id="PlasmoDB:PfKH02_130056600"/>
<dbReference type="VEuPathDB" id="PlasmoDB:PfML01_130057800"/>
<dbReference type="VEuPathDB" id="PlasmoDB:PfNF135_130057900"/>
<dbReference type="VEuPathDB" id="PlasmoDB:PfNF166_130058600"/>
<dbReference type="VEuPathDB" id="PlasmoDB:PfNF54_130058300"/>
<dbReference type="VEuPathDB" id="PlasmoDB:PfSD01_130060400"/>
<dbReference type="VEuPathDB" id="PlasmoDB:PfSN01_130056700"/>
<dbReference type="VEuPathDB" id="PlasmoDB:PfTG01_130059400"/>
<dbReference type="OMA" id="WKSRSCE"/>
<dbReference type="GO" id="GO:0005789">
    <property type="term" value="C:endoplasmic reticulum membrane"/>
    <property type="evidence" value="ECO:0007669"/>
    <property type="project" value="UniProtKB-SubCell"/>
</dbReference>
<dbReference type="GO" id="GO:0046923">
    <property type="term" value="F:ER retention sequence binding"/>
    <property type="evidence" value="ECO:0007669"/>
    <property type="project" value="InterPro"/>
</dbReference>
<dbReference type="GO" id="GO:0006621">
    <property type="term" value="P:protein retention in ER lumen"/>
    <property type="evidence" value="ECO:0007669"/>
    <property type="project" value="InterPro"/>
</dbReference>
<dbReference type="GO" id="GO:0015031">
    <property type="term" value="P:protein transport"/>
    <property type="evidence" value="ECO:0007669"/>
    <property type="project" value="UniProtKB-KW"/>
</dbReference>
<dbReference type="GO" id="GO:0016192">
    <property type="term" value="P:vesicle-mediated transport"/>
    <property type="evidence" value="ECO:0007669"/>
    <property type="project" value="UniProtKB-KW"/>
</dbReference>
<dbReference type="InterPro" id="IPR000133">
    <property type="entry name" value="ER_ret_rcpt"/>
</dbReference>
<dbReference type="PANTHER" id="PTHR10585">
    <property type="entry name" value="ER LUMEN PROTEIN RETAINING RECEPTOR"/>
    <property type="match status" value="1"/>
</dbReference>
<dbReference type="Pfam" id="PF00810">
    <property type="entry name" value="ER_lumen_recept"/>
    <property type="match status" value="1"/>
</dbReference>
<dbReference type="PRINTS" id="PR00660">
    <property type="entry name" value="ERLUMENR"/>
</dbReference>
<dbReference type="PROSITE" id="PS00951">
    <property type="entry name" value="ER_LUMEN_RECEPTOR_1"/>
    <property type="match status" value="1"/>
</dbReference>
<dbReference type="PROSITE" id="PS00952">
    <property type="entry name" value="ER_LUMEN_RECEPTOR_2"/>
    <property type="match status" value="1"/>
</dbReference>
<gene>
    <name type="primary">ERD2</name>
</gene>
<organism>
    <name type="scientific">Plasmodium falciparum</name>
    <dbReference type="NCBI Taxonomy" id="5833"/>
    <lineage>
        <taxon>Eukaryota</taxon>
        <taxon>Sar</taxon>
        <taxon>Alveolata</taxon>
        <taxon>Apicomplexa</taxon>
        <taxon>Aconoidasida</taxon>
        <taxon>Haemosporida</taxon>
        <taxon>Plasmodiidae</taxon>
        <taxon>Plasmodium</taxon>
        <taxon>Plasmodium (Laverania)</taxon>
    </lineage>
</organism>
<sequence>MNIFRLIGDILHLVSMYILIMKLKKSKNCIGISCRMQELYLIVFLCRYIDLFFVFVSFYNTVMKITFILTIAYTIYLIRLKLPISQTYNRKVDNFKSEKYLIPPCLVLSLLTCKTYNLYNILWSFSIWLESVAILPQLVLLEKQREVENITSHYVITMGLYRAFYILNWIYRYFFDDKPYINVVGWIGGLIQTLLYIDFFYYFALAKWYGKKLVLPFNGEV</sequence>
<evidence type="ECO:0000250" key="1"/>
<evidence type="ECO:0000255" key="2"/>
<evidence type="ECO:0000305" key="3"/>
<reference key="1">
    <citation type="journal article" date="1993" name="EMBO J.">
        <title>Identification and localization of ERD2 in the malaria parasite Plasmodium falciparum: separation from sites of sphingomyelin synthesis and implications for organization of the Golgi.</title>
        <authorList>
            <person name="Elmendorf H.G."/>
            <person name="Haldar K."/>
        </authorList>
    </citation>
    <scope>NUCLEOTIDE SEQUENCE [MRNA]</scope>
    <source>
        <strain>ITGZF6</strain>
    </source>
</reference>
<keyword id="KW-0256">Endoplasmic reticulum</keyword>
<keyword id="KW-0931">ER-Golgi transport</keyword>
<keyword id="KW-0472">Membrane</keyword>
<keyword id="KW-0653">Protein transport</keyword>
<keyword id="KW-0675">Receptor</keyword>
<keyword id="KW-0812">Transmembrane</keyword>
<keyword id="KW-1133">Transmembrane helix</keyword>
<keyword id="KW-0813">Transport</keyword>
<accession>P33948</accession>
<protein>
    <recommendedName>
        <fullName>ER lumen protein-retaining receptor</fullName>
    </recommendedName>
</protein>
<comment type="function">
    <text evidence="1">Required for the retention of luminal endoplasmic reticulum proteins. Determines the specificity of the luminal ER protein retention system. Also required for normal vesicular traffic through the Golgi (By similarity).</text>
</comment>
<comment type="subcellular location">
    <subcellularLocation>
        <location>Endoplasmic reticulum membrane</location>
        <topology>Multi-pass membrane protein</topology>
    </subcellularLocation>
</comment>
<comment type="similarity">
    <text evidence="3">Belongs to the ERD2 family.</text>
</comment>
<proteinExistence type="evidence at transcript level"/>